<name>PDRP_GEOMG</name>
<protein>
    <recommendedName>
        <fullName evidence="1">Putative pyruvate, phosphate dikinase regulatory protein</fullName>
        <shortName evidence="1">PPDK regulatory protein</shortName>
        <ecNumber evidence="1">2.7.11.32</ecNumber>
        <ecNumber evidence="1">2.7.4.27</ecNumber>
    </recommendedName>
</protein>
<organism>
    <name type="scientific">Geobacter metallireducens (strain ATCC 53774 / DSM 7210 / GS-15)</name>
    <dbReference type="NCBI Taxonomy" id="269799"/>
    <lineage>
        <taxon>Bacteria</taxon>
        <taxon>Pseudomonadati</taxon>
        <taxon>Thermodesulfobacteriota</taxon>
        <taxon>Desulfuromonadia</taxon>
        <taxon>Geobacterales</taxon>
        <taxon>Geobacteraceae</taxon>
        <taxon>Geobacter</taxon>
    </lineage>
</organism>
<proteinExistence type="inferred from homology"/>
<keyword id="KW-0418">Kinase</keyword>
<keyword id="KW-0547">Nucleotide-binding</keyword>
<keyword id="KW-1185">Reference proteome</keyword>
<keyword id="KW-0723">Serine/threonine-protein kinase</keyword>
<keyword id="KW-0808">Transferase</keyword>
<feature type="chain" id="PRO_0000316677" description="Putative pyruvate, phosphate dikinase regulatory protein">
    <location>
        <begin position="1"/>
        <end position="269"/>
    </location>
</feature>
<feature type="binding site" evidence="1">
    <location>
        <begin position="151"/>
        <end position="158"/>
    </location>
    <ligand>
        <name>ADP</name>
        <dbReference type="ChEBI" id="CHEBI:456216"/>
    </ligand>
</feature>
<comment type="function">
    <text evidence="1">Bifunctional serine/threonine kinase and phosphorylase involved in the regulation of the pyruvate, phosphate dikinase (PPDK) by catalyzing its phosphorylation/dephosphorylation.</text>
</comment>
<comment type="catalytic activity">
    <reaction evidence="1">
        <text>N(tele)-phospho-L-histidyl/L-threonyl-[pyruvate, phosphate dikinase] + ADP = N(tele)-phospho-L-histidyl/O-phospho-L-threonyl-[pyruvate, phosphate dikinase] + AMP + H(+)</text>
        <dbReference type="Rhea" id="RHEA:43692"/>
        <dbReference type="Rhea" id="RHEA-COMP:10650"/>
        <dbReference type="Rhea" id="RHEA-COMP:10651"/>
        <dbReference type="ChEBI" id="CHEBI:15378"/>
        <dbReference type="ChEBI" id="CHEBI:30013"/>
        <dbReference type="ChEBI" id="CHEBI:61977"/>
        <dbReference type="ChEBI" id="CHEBI:83586"/>
        <dbReference type="ChEBI" id="CHEBI:456215"/>
        <dbReference type="ChEBI" id="CHEBI:456216"/>
        <dbReference type="EC" id="2.7.11.32"/>
    </reaction>
</comment>
<comment type="catalytic activity">
    <reaction evidence="1">
        <text>N(tele)-phospho-L-histidyl/O-phospho-L-threonyl-[pyruvate, phosphate dikinase] + phosphate + H(+) = N(tele)-phospho-L-histidyl/L-threonyl-[pyruvate, phosphate dikinase] + diphosphate</text>
        <dbReference type="Rhea" id="RHEA:43696"/>
        <dbReference type="Rhea" id="RHEA-COMP:10650"/>
        <dbReference type="Rhea" id="RHEA-COMP:10651"/>
        <dbReference type="ChEBI" id="CHEBI:15378"/>
        <dbReference type="ChEBI" id="CHEBI:30013"/>
        <dbReference type="ChEBI" id="CHEBI:33019"/>
        <dbReference type="ChEBI" id="CHEBI:43474"/>
        <dbReference type="ChEBI" id="CHEBI:61977"/>
        <dbReference type="ChEBI" id="CHEBI:83586"/>
        <dbReference type="EC" id="2.7.4.27"/>
    </reaction>
</comment>
<comment type="similarity">
    <text evidence="1">Belongs to the pyruvate, phosphate/water dikinase regulatory protein family. PDRP subfamily.</text>
</comment>
<evidence type="ECO:0000255" key="1">
    <source>
        <dbReference type="HAMAP-Rule" id="MF_00921"/>
    </source>
</evidence>
<accession>Q39Q78</accession>
<gene>
    <name type="ordered locus">Gmet_3384</name>
</gene>
<dbReference type="EC" id="2.7.11.32" evidence="1"/>
<dbReference type="EC" id="2.7.4.27" evidence="1"/>
<dbReference type="EMBL" id="CP000148">
    <property type="protein sequence ID" value="ABB33596.1"/>
    <property type="molecule type" value="Genomic_DNA"/>
</dbReference>
<dbReference type="RefSeq" id="WP_004512610.1">
    <property type="nucleotide sequence ID" value="NC_007517.1"/>
</dbReference>
<dbReference type="SMR" id="Q39Q78"/>
<dbReference type="STRING" id="269799.Gmet_3384"/>
<dbReference type="KEGG" id="gme:Gmet_3384"/>
<dbReference type="eggNOG" id="COG1806">
    <property type="taxonomic scope" value="Bacteria"/>
</dbReference>
<dbReference type="HOGENOM" id="CLU_046206_2_1_7"/>
<dbReference type="Proteomes" id="UP000007073">
    <property type="component" value="Chromosome"/>
</dbReference>
<dbReference type="GO" id="GO:0043531">
    <property type="term" value="F:ADP binding"/>
    <property type="evidence" value="ECO:0007669"/>
    <property type="project" value="UniProtKB-UniRule"/>
</dbReference>
<dbReference type="GO" id="GO:0005524">
    <property type="term" value="F:ATP binding"/>
    <property type="evidence" value="ECO:0007669"/>
    <property type="project" value="InterPro"/>
</dbReference>
<dbReference type="GO" id="GO:0016776">
    <property type="term" value="F:phosphotransferase activity, phosphate group as acceptor"/>
    <property type="evidence" value="ECO:0007669"/>
    <property type="project" value="UniProtKB-UniRule"/>
</dbReference>
<dbReference type="GO" id="GO:0004674">
    <property type="term" value="F:protein serine/threonine kinase activity"/>
    <property type="evidence" value="ECO:0007669"/>
    <property type="project" value="UniProtKB-UniRule"/>
</dbReference>
<dbReference type="HAMAP" id="MF_00921">
    <property type="entry name" value="PDRP"/>
    <property type="match status" value="1"/>
</dbReference>
<dbReference type="InterPro" id="IPR005177">
    <property type="entry name" value="Kinase-pyrophosphorylase"/>
</dbReference>
<dbReference type="InterPro" id="IPR026565">
    <property type="entry name" value="PPDK_reg"/>
</dbReference>
<dbReference type="NCBIfam" id="NF003742">
    <property type="entry name" value="PRK05339.1"/>
    <property type="match status" value="1"/>
</dbReference>
<dbReference type="PANTHER" id="PTHR31756">
    <property type="entry name" value="PYRUVATE, PHOSPHATE DIKINASE REGULATORY PROTEIN 1, CHLOROPLASTIC"/>
    <property type="match status" value="1"/>
</dbReference>
<dbReference type="PANTHER" id="PTHR31756:SF3">
    <property type="entry name" value="PYRUVATE, PHOSPHATE DIKINASE REGULATORY PROTEIN 1, CHLOROPLASTIC"/>
    <property type="match status" value="1"/>
</dbReference>
<dbReference type="Pfam" id="PF03618">
    <property type="entry name" value="Kinase-PPPase"/>
    <property type="match status" value="1"/>
</dbReference>
<reference key="1">
    <citation type="journal article" date="2009" name="BMC Microbiol.">
        <title>The genome sequence of Geobacter metallireducens: features of metabolism, physiology and regulation common and dissimilar to Geobacter sulfurreducens.</title>
        <authorList>
            <person name="Aklujkar M."/>
            <person name="Krushkal J."/>
            <person name="DiBartolo G."/>
            <person name="Lapidus A."/>
            <person name="Land M.L."/>
            <person name="Lovley D.R."/>
        </authorList>
    </citation>
    <scope>NUCLEOTIDE SEQUENCE [LARGE SCALE GENOMIC DNA]</scope>
    <source>
        <strain>ATCC 53774 / DSM 7210 / GS-15</strain>
    </source>
</reference>
<sequence>MNGSMRHIYLFSDATGETVERVLRAALSQFRDVEARIHRMSKIRTREDILSALEDVLKEPGIVIYTLVDAELAQLLRDEAEAHGLDALDLISSLLFKLSDFFGVAPQNEPGLLYELNTEYHKRIEAVDFTVKHDDGQDPRGLSKADFVLVGVSRSSKTPLSMYLAHKGYKVANVPLVKGIDPPAELFKVDQNKIVGLLIDPHRLLEIRSVRLKNLGQMSRGSYADYEKIEDELNYCRQLYRRNPQWLVIDVTKRSVEESAAEIIQKLCS</sequence>